<name>DNAT_ECOBW</name>
<organism>
    <name type="scientific">Escherichia coli (strain K12 / MC4100 / BW2952)</name>
    <dbReference type="NCBI Taxonomy" id="595496"/>
    <lineage>
        <taxon>Bacteria</taxon>
        <taxon>Pseudomonadati</taxon>
        <taxon>Pseudomonadota</taxon>
        <taxon>Gammaproteobacteria</taxon>
        <taxon>Enterobacterales</taxon>
        <taxon>Enterobacteriaceae</taxon>
        <taxon>Escherichia</taxon>
    </lineage>
</organism>
<keyword id="KW-0235">DNA replication</keyword>
<keyword id="KW-0238">DNA-binding</keyword>
<keyword id="KW-0639">Primosome</keyword>
<sequence>MSSRVLTPDVVGIDALVHDHQTVLAKAEGGVVAVFANNAPAFYAVTPARLAELLALEEKLARPGSDVALDDQLYQEPQAAPVAVPMGKFAMYPDWQPDADFIRLAALWGVALREPVTTEELASFIAYWQAEGKVFHHVQWQQKLARSLQIGRASNGGLPKRDVNTVSEPDSQIPPGFRG</sequence>
<evidence type="ECO:0000255" key="1">
    <source>
        <dbReference type="HAMAP-Rule" id="MF_01061"/>
    </source>
</evidence>
<evidence type="ECO:0000256" key="2">
    <source>
        <dbReference type="SAM" id="MobiDB-lite"/>
    </source>
</evidence>
<accession>C4ZT45</accession>
<feature type="chain" id="PRO_1000213448" description="Replication restart protein DnaT">
    <location>
        <begin position="1"/>
        <end position="179"/>
    </location>
</feature>
<feature type="region of interest" description="Disordered" evidence="2">
    <location>
        <begin position="156"/>
        <end position="179"/>
    </location>
</feature>
<reference key="1">
    <citation type="journal article" date="2009" name="J. Bacteriol.">
        <title>Genomic sequencing reveals regulatory mutations and recombinational events in the widely used MC4100 lineage of Escherichia coli K-12.</title>
        <authorList>
            <person name="Ferenci T."/>
            <person name="Zhou Z."/>
            <person name="Betteridge T."/>
            <person name="Ren Y."/>
            <person name="Liu Y."/>
            <person name="Feng L."/>
            <person name="Reeves P.R."/>
            <person name="Wang L."/>
        </authorList>
    </citation>
    <scope>NUCLEOTIDE SEQUENCE [LARGE SCALE GENOMIC DNA]</scope>
    <source>
        <strain>K12 / MC4100 / BW2952</strain>
    </source>
</reference>
<comment type="function">
    <text evidence="1">Involved in the restart of stalled replication forks, which reloads the replicative helicase on sites other than the origin of replication. Can function in multiple replication restart pathways. Displaces ssDNA from a PriB-ssDNA complex. Probably forms a spiral filament on ssDNA.</text>
</comment>
<comment type="subunit">
    <text evidence="1">Homooligomerizes. Interacts with PriB. Component of the replication restart primosome. Primosome assembly occurs via a 'hand-off' mechanism. PriA binds to replication forks, subsequently PriB then DnaT bind; DnaT then displaces ssDNA to generate the helicase loading substrate.</text>
</comment>
<comment type="similarity">
    <text evidence="1">Belongs to the DnaT family.</text>
</comment>
<dbReference type="EMBL" id="CP001396">
    <property type="protein sequence ID" value="ACR62810.1"/>
    <property type="molecule type" value="Genomic_DNA"/>
</dbReference>
<dbReference type="RefSeq" id="WP_000098818.1">
    <property type="nucleotide sequence ID" value="NC_012759.1"/>
</dbReference>
<dbReference type="SMR" id="C4ZT45"/>
<dbReference type="GeneID" id="93777486"/>
<dbReference type="KEGG" id="ebw:BWG_4055"/>
<dbReference type="HOGENOM" id="CLU_1501592_0_0_6"/>
<dbReference type="GO" id="GO:1990077">
    <property type="term" value="C:primosome complex"/>
    <property type="evidence" value="ECO:0007669"/>
    <property type="project" value="UniProtKB-KW"/>
</dbReference>
<dbReference type="GO" id="GO:0006269">
    <property type="term" value="P:DNA replication, synthesis of primer"/>
    <property type="evidence" value="ECO:0007669"/>
    <property type="project" value="UniProtKB-UniRule"/>
</dbReference>
<dbReference type="FunFam" id="1.10.8.1180:FF:000001">
    <property type="entry name" value="Primosomal protein 1"/>
    <property type="match status" value="1"/>
</dbReference>
<dbReference type="Gene3D" id="1.10.8.1180">
    <property type="match status" value="1"/>
</dbReference>
<dbReference type="HAMAP" id="MF_01061">
    <property type="entry name" value="DnaT"/>
    <property type="match status" value="1"/>
</dbReference>
<dbReference type="InterPro" id="IPR020917">
    <property type="entry name" value="DnaT"/>
</dbReference>
<dbReference type="InterPro" id="IPR040480">
    <property type="entry name" value="DnaT_DNA_bind"/>
</dbReference>
<dbReference type="NCBIfam" id="NF002770">
    <property type="entry name" value="PRK02854.1"/>
    <property type="match status" value="1"/>
</dbReference>
<dbReference type="Pfam" id="PF17948">
    <property type="entry name" value="DnaT"/>
    <property type="match status" value="1"/>
</dbReference>
<proteinExistence type="inferred from homology"/>
<gene>
    <name evidence="1" type="primary">dnaT</name>
    <name type="ordered locus">BWG_4055</name>
</gene>
<protein>
    <recommendedName>
        <fullName evidence="1">Replication restart protein DnaT</fullName>
    </recommendedName>
</protein>